<reference key="1">
    <citation type="journal article" date="2001" name="Proc. Natl. Acad. Sci. U.S.A.">
        <title>Two types of MGDG synthase genes, found widely in both 16:3 and 18:3 plants, differentially mediate galactolipid syntheses in photosynthetic and nonphotosynthetic tissues in Arabidopsis thaliana.</title>
        <authorList>
            <person name="Awai K."/>
            <person name="Marechal E."/>
            <person name="Block M.A."/>
            <person name="Brun D."/>
            <person name="Masuda T."/>
            <person name="Shimada H."/>
            <person name="Takamiya K."/>
            <person name="Ohta H."/>
            <person name="Joyard J."/>
        </authorList>
    </citation>
    <scope>NUCLEOTIDE SEQUENCE [MRNA]</scope>
    <scope>FUNCTION</scope>
    <scope>CATALYTIC ACTIVITY</scope>
    <scope>SUBCELLULAR LOCATION</scope>
    <scope>TISSUE SPECIFICITY</scope>
    <scope>DEVELOPMENTAL STAGE</scope>
    <scope>INDUCTION</scope>
    <source>
        <strain>cv. Columbia</strain>
    </source>
</reference>
<reference key="2">
    <citation type="journal article" date="2014" name="Plant J.">
        <title>The plant glycosyltransferase clone collection for functional genomics.</title>
        <authorList>
            <person name="Lao J."/>
            <person name="Oikawa A."/>
            <person name="Bromley J.R."/>
            <person name="McInerney P."/>
            <person name="Suttangkakul A."/>
            <person name="Smith-Moritz A.M."/>
            <person name="Plahar H."/>
            <person name="Chiu T.-Y."/>
            <person name="Gonzalez Fernandez-Nino S.M.G."/>
            <person name="Ebert B."/>
            <person name="Yang F."/>
            <person name="Christiansen K.M."/>
            <person name="Hansen S.F."/>
            <person name="Stonebloom S."/>
            <person name="Adams P.D."/>
            <person name="Ronald P.C."/>
            <person name="Hillson N.J."/>
            <person name="Hadi M.Z."/>
            <person name="Vega-Sanchez M.E."/>
            <person name="Loque D."/>
            <person name="Scheller H.V."/>
            <person name="Heazlewood J.L."/>
        </authorList>
    </citation>
    <scope>NUCLEOTIDE SEQUENCE [MRNA]</scope>
</reference>
<reference key="3">
    <citation type="journal article" date="2000" name="Nature">
        <title>Sequence and analysis of chromosome 5 of the plant Arabidopsis thaliana.</title>
        <authorList>
            <person name="Tabata S."/>
            <person name="Kaneko T."/>
            <person name="Nakamura Y."/>
            <person name="Kotani H."/>
            <person name="Kato T."/>
            <person name="Asamizu E."/>
            <person name="Miyajima N."/>
            <person name="Sasamoto S."/>
            <person name="Kimura T."/>
            <person name="Hosouchi T."/>
            <person name="Kawashima K."/>
            <person name="Kohara M."/>
            <person name="Matsumoto M."/>
            <person name="Matsuno A."/>
            <person name="Muraki A."/>
            <person name="Nakayama S."/>
            <person name="Nakazaki N."/>
            <person name="Naruo K."/>
            <person name="Okumura S."/>
            <person name="Shinpo S."/>
            <person name="Takeuchi C."/>
            <person name="Wada T."/>
            <person name="Watanabe A."/>
            <person name="Yamada M."/>
            <person name="Yasuda M."/>
            <person name="Sato S."/>
            <person name="de la Bastide M."/>
            <person name="Huang E."/>
            <person name="Spiegel L."/>
            <person name="Gnoj L."/>
            <person name="O'Shaughnessy A."/>
            <person name="Preston R."/>
            <person name="Habermann K."/>
            <person name="Murray J."/>
            <person name="Johnson D."/>
            <person name="Rohlfing T."/>
            <person name="Nelson J."/>
            <person name="Stoneking T."/>
            <person name="Pepin K."/>
            <person name="Spieth J."/>
            <person name="Sekhon M."/>
            <person name="Armstrong J."/>
            <person name="Becker M."/>
            <person name="Belter E."/>
            <person name="Cordum H."/>
            <person name="Cordes M."/>
            <person name="Courtney L."/>
            <person name="Courtney W."/>
            <person name="Dante M."/>
            <person name="Du H."/>
            <person name="Edwards J."/>
            <person name="Fryman J."/>
            <person name="Haakensen B."/>
            <person name="Lamar E."/>
            <person name="Latreille P."/>
            <person name="Leonard S."/>
            <person name="Meyer R."/>
            <person name="Mulvaney E."/>
            <person name="Ozersky P."/>
            <person name="Riley A."/>
            <person name="Strowmatt C."/>
            <person name="Wagner-McPherson C."/>
            <person name="Wollam A."/>
            <person name="Yoakum M."/>
            <person name="Bell M."/>
            <person name="Dedhia N."/>
            <person name="Parnell L."/>
            <person name="Shah R."/>
            <person name="Rodriguez M."/>
            <person name="Hoon See L."/>
            <person name="Vil D."/>
            <person name="Baker J."/>
            <person name="Kirchoff K."/>
            <person name="Toth K."/>
            <person name="King L."/>
            <person name="Bahret A."/>
            <person name="Miller B."/>
            <person name="Marra M.A."/>
            <person name="Martienssen R."/>
            <person name="McCombie W.R."/>
            <person name="Wilson R.K."/>
            <person name="Murphy G."/>
            <person name="Bancroft I."/>
            <person name="Volckaert G."/>
            <person name="Wambutt R."/>
            <person name="Duesterhoeft A."/>
            <person name="Stiekema W."/>
            <person name="Pohl T."/>
            <person name="Entian K.-D."/>
            <person name="Terryn N."/>
            <person name="Hartley N."/>
            <person name="Bent E."/>
            <person name="Johnson S."/>
            <person name="Langham S.-A."/>
            <person name="McCullagh B."/>
            <person name="Robben J."/>
            <person name="Grymonprez B."/>
            <person name="Zimmermann W."/>
            <person name="Ramsperger U."/>
            <person name="Wedler H."/>
            <person name="Balke K."/>
            <person name="Wedler E."/>
            <person name="Peters S."/>
            <person name="van Staveren M."/>
            <person name="Dirkse W."/>
            <person name="Mooijman P."/>
            <person name="Klein Lankhorst R."/>
            <person name="Weitzenegger T."/>
            <person name="Bothe G."/>
            <person name="Rose M."/>
            <person name="Hauf J."/>
            <person name="Berneiser S."/>
            <person name="Hempel S."/>
            <person name="Feldpausch M."/>
            <person name="Lamberth S."/>
            <person name="Villarroel R."/>
            <person name="Gielen J."/>
            <person name="Ardiles W."/>
            <person name="Bents O."/>
            <person name="Lemcke K."/>
            <person name="Kolesov G."/>
            <person name="Mayer K.F.X."/>
            <person name="Rudd S."/>
            <person name="Schoof H."/>
            <person name="Schueller C."/>
            <person name="Zaccaria P."/>
            <person name="Mewes H.-W."/>
            <person name="Bevan M."/>
            <person name="Fransz P.F."/>
        </authorList>
    </citation>
    <scope>NUCLEOTIDE SEQUENCE [LARGE SCALE GENOMIC DNA]</scope>
    <source>
        <strain>cv. Columbia</strain>
    </source>
</reference>
<reference key="4">
    <citation type="journal article" date="2017" name="Plant J.">
        <title>Araport11: a complete reannotation of the Arabidopsis thaliana reference genome.</title>
        <authorList>
            <person name="Cheng C.Y."/>
            <person name="Krishnakumar V."/>
            <person name="Chan A.P."/>
            <person name="Thibaud-Nissen F."/>
            <person name="Schobel S."/>
            <person name="Town C.D."/>
        </authorList>
    </citation>
    <scope>GENOME REANNOTATION</scope>
    <source>
        <strain>cv. Columbia</strain>
    </source>
</reference>
<reference key="5">
    <citation type="journal article" date="2003" name="Science">
        <title>Empirical analysis of transcriptional activity in the Arabidopsis genome.</title>
        <authorList>
            <person name="Yamada K."/>
            <person name="Lim J."/>
            <person name="Dale J.M."/>
            <person name="Chen H."/>
            <person name="Shinn P."/>
            <person name="Palm C.J."/>
            <person name="Southwick A.M."/>
            <person name="Wu H.C."/>
            <person name="Kim C.J."/>
            <person name="Nguyen M."/>
            <person name="Pham P.K."/>
            <person name="Cheuk R.F."/>
            <person name="Karlin-Newmann G."/>
            <person name="Liu S.X."/>
            <person name="Lam B."/>
            <person name="Sakano H."/>
            <person name="Wu T."/>
            <person name="Yu G."/>
            <person name="Miranda M."/>
            <person name="Quach H.L."/>
            <person name="Tripp M."/>
            <person name="Chang C.H."/>
            <person name="Lee J.M."/>
            <person name="Toriumi M.J."/>
            <person name="Chan M.M."/>
            <person name="Tang C.C."/>
            <person name="Onodera C.S."/>
            <person name="Deng J.M."/>
            <person name="Akiyama K."/>
            <person name="Ansari Y."/>
            <person name="Arakawa T."/>
            <person name="Banh J."/>
            <person name="Banno F."/>
            <person name="Bowser L."/>
            <person name="Brooks S.Y."/>
            <person name="Carninci P."/>
            <person name="Chao Q."/>
            <person name="Choy N."/>
            <person name="Enju A."/>
            <person name="Goldsmith A.D."/>
            <person name="Gurjal M."/>
            <person name="Hansen N.F."/>
            <person name="Hayashizaki Y."/>
            <person name="Johnson-Hopson C."/>
            <person name="Hsuan V.W."/>
            <person name="Iida K."/>
            <person name="Karnes M."/>
            <person name="Khan S."/>
            <person name="Koesema E."/>
            <person name="Ishida J."/>
            <person name="Jiang P.X."/>
            <person name="Jones T."/>
            <person name="Kawai J."/>
            <person name="Kamiya A."/>
            <person name="Meyers C."/>
            <person name="Nakajima M."/>
            <person name="Narusaka M."/>
            <person name="Seki M."/>
            <person name="Sakurai T."/>
            <person name="Satou M."/>
            <person name="Tamse R."/>
            <person name="Vaysberg M."/>
            <person name="Wallender E.K."/>
            <person name="Wong C."/>
            <person name="Yamamura Y."/>
            <person name="Yuan S."/>
            <person name="Shinozaki K."/>
            <person name="Davis R.W."/>
            <person name="Theologis A."/>
            <person name="Ecker J.R."/>
        </authorList>
    </citation>
    <scope>NUCLEOTIDE SEQUENCE [LARGE SCALE MRNA] OF 10-468</scope>
    <source>
        <strain>cv. Columbia</strain>
    </source>
</reference>
<reference key="6">
    <citation type="journal article" date="2004" name="Plant Physiol.">
        <title>Arabidopsis type B monogalactosyldiacylglycerol synthase genes are expressed during pollen tube growth and induced by phosphate starvation.</title>
        <authorList>
            <person name="Kobayashi K."/>
            <person name="Awai K."/>
            <person name="Takamiya K."/>
            <person name="Ohta H."/>
        </authorList>
    </citation>
    <scope>TISSUE SPECIFICITY</scope>
    <scope>INDUCTION</scope>
</reference>
<reference key="7">
    <citation type="journal article" date="2006" name="Plant J.">
        <title>Membrane lipid alteration during phosphate starvation is regulated by phosphate signaling and auxin/cytokinin cross-talk.</title>
        <authorList>
            <person name="Kobayashi K."/>
            <person name="Masuda T."/>
            <person name="Takamiya K."/>
            <person name="Ohta H."/>
        </authorList>
    </citation>
    <scope>INDUCTION</scope>
</reference>
<reference key="8">
    <citation type="journal article" date="2009" name="Plant J.">
        <title>Type-B monogalactosyldiacylglycerol synthases are involved in phosphate starvation-induced lipid remodeling, and are crucial for low-phosphate adaptation.</title>
        <authorList>
            <person name="Kobayashi K."/>
            <person name="Awai K."/>
            <person name="Nakamura M."/>
            <person name="Nagatani A."/>
            <person name="Masuda T."/>
            <person name="Ohta H."/>
        </authorList>
    </citation>
    <scope>FUNCTION</scope>
</reference>
<reference key="9">
    <citation type="journal article" date="2011" name="Nat. Chem. Biol.">
        <title>Chemical inhibitors of monogalactosyldiacylglycerol synthases in Arabidopsis thaliana.</title>
        <authorList>
            <person name="Botte C.Y."/>
            <person name="Deligny M."/>
            <person name="Roccia A."/>
            <person name="Bonneau A.L."/>
            <person name="Saidani N."/>
            <person name="Hardre H."/>
            <person name="Aci S."/>
            <person name="Yamaryo-Botte Y."/>
            <person name="Jouhet J."/>
            <person name="Dubots E."/>
            <person name="Loizeau K."/>
            <person name="Bastien O."/>
            <person name="Brehelin L."/>
            <person name="Joyard J."/>
            <person name="Cintrat J.C."/>
            <person name="Falconet D."/>
            <person name="Block M.A."/>
            <person name="Rousseau B."/>
            <person name="Lopez R."/>
            <person name="Marechal E."/>
        </authorList>
    </citation>
    <scope>ACTIVITY REGULATION</scope>
</reference>
<reference key="10">
    <citation type="journal article" date="2019" name="Plant Mol. Biol.">
        <title>Lipid remodeling under acidic conditions and its interplay with low Pi stress in Arabidopsis.</title>
        <authorList>
            <person name="Murakawa M."/>
            <person name="Ohta H."/>
            <person name="Shimojima M."/>
        </authorList>
    </citation>
    <scope>FUNCTION</scope>
    <scope>INDUCTION</scope>
</reference>
<keyword id="KW-0150">Chloroplast</keyword>
<keyword id="KW-0328">Glycosyltransferase</keyword>
<keyword id="KW-0472">Membrane</keyword>
<keyword id="KW-0934">Plastid</keyword>
<keyword id="KW-1002">Plastid outer membrane</keyword>
<keyword id="KW-1185">Reference proteome</keyword>
<keyword id="KW-0808">Transferase</keyword>
<keyword id="KW-0809">Transit peptide</keyword>
<proteinExistence type="evidence at protein level"/>
<accession>O82730</accession>
<accession>Q94JU8</accession>
<accession>W8Q2S4</accession>
<sequence>MATTVMALAEKVLERVYGTSKSAVSVTSGDGEKTHRHTHHHIHRIKSYDDIDEDESSLELIQIGAERTKNVLILMSDTGGGHRASAEAIRDAFKIEFGDKYRVIVKDVWKEYTGWPLNDMERSYKFMVKHVQLWKVAFHSTSPKWIHSCYLAAIAAYYAKEVEAGLMEYKPEIIISVHPLMQHIPLWVLKWQELQKRVLFVTVITDLNTCHPTWFHPGVNRCYCPSQEVAKRALFDGLDESQVRVFGLPVRPSFARAVLVKDDLRKELEMDQDLRAVLLMGGGEGMGPVKETAKALEEFLYDKENRKPIGQMVVICGRNKKLASALEAIDWKIPVKVRGFETQMEKWMGACDCIITKAGPGTIAESLIRSLPIILNDYIPGQEKGNVPYVVENGAGVFTRSPKETARIVGEWFSTKTDELEQTSDNARKLAQPEAVFDIVKDIDELSEQRGPLASVSYNLTSSFASLV</sequence>
<organism>
    <name type="scientific">Arabidopsis thaliana</name>
    <name type="common">Mouse-ear cress</name>
    <dbReference type="NCBI Taxonomy" id="3702"/>
    <lineage>
        <taxon>Eukaryota</taxon>
        <taxon>Viridiplantae</taxon>
        <taxon>Streptophyta</taxon>
        <taxon>Embryophyta</taxon>
        <taxon>Tracheophyta</taxon>
        <taxon>Spermatophyta</taxon>
        <taxon>Magnoliopsida</taxon>
        <taxon>eudicotyledons</taxon>
        <taxon>Gunneridae</taxon>
        <taxon>Pentapetalae</taxon>
        <taxon>rosids</taxon>
        <taxon>malvids</taxon>
        <taxon>Brassicales</taxon>
        <taxon>Brassicaceae</taxon>
        <taxon>Camelineae</taxon>
        <taxon>Arabidopsis</taxon>
    </lineage>
</organism>
<evidence type="ECO:0000250" key="1">
    <source>
        <dbReference type="UniProtKB" id="O81770"/>
    </source>
</evidence>
<evidence type="ECO:0000255" key="2"/>
<evidence type="ECO:0000269" key="3">
    <source>
    </source>
</evidence>
<evidence type="ECO:0000269" key="4">
    <source>
    </source>
</evidence>
<evidence type="ECO:0000269" key="5">
    <source>
    </source>
</evidence>
<evidence type="ECO:0000269" key="6">
    <source>
    </source>
</evidence>
<evidence type="ECO:0000269" key="7">
    <source>
    </source>
</evidence>
<evidence type="ECO:0000269" key="8">
    <source>
    </source>
</evidence>
<evidence type="ECO:0000303" key="9">
    <source>
    </source>
</evidence>
<evidence type="ECO:0000305" key="10"/>
<evidence type="ECO:0000305" key="11">
    <source>
    </source>
</evidence>
<evidence type="ECO:0000312" key="12">
    <source>
        <dbReference type="Araport" id="AT5G20410"/>
    </source>
</evidence>
<comment type="function">
    <text evidence="3 6 8">Involved in the synthesis of monogalactosyldiacylglycerol, the major structural component of photosynthetic membranes and in the chloroplast envelope biogenesis. Can use both prokaryotic (18:1/16:0) or eukaryotic (18:2/18:2) 1,2-diacylglycerol species, but operates with some preference for the eukaryotic one. Plays a minor role in galactolipid synthesis in chloroplasts (PubMed:11553816). Is required for membrane lipid remodeling in phosphate-starved roots (PubMed:18808455, PubMed:31201686). Acts as the minor factor involved in digalactosyldiacylglycerol (DGDG) biosynthesis in phosphate-starved roots (PubMed:18808455). Does not seem to be required for plant growth under nutrient-sufficient conditions (PubMed:18808455). Required for membrane lipid remodeling in plants grown in acidic conditions (PubMed:31201686).</text>
</comment>
<comment type="catalytic activity">
    <reaction evidence="3">
        <text>a 1,2-diacyl-sn-glycerol + UDP-alpha-D-galactose = a 1,2-diacyl-3-O-(beta-D-galactosyl)-sn-glycerol + UDP + H(+)</text>
        <dbReference type="Rhea" id="RHEA:14945"/>
        <dbReference type="ChEBI" id="CHEBI:15378"/>
        <dbReference type="ChEBI" id="CHEBI:17615"/>
        <dbReference type="ChEBI" id="CHEBI:17815"/>
        <dbReference type="ChEBI" id="CHEBI:58223"/>
        <dbReference type="ChEBI" id="CHEBI:66914"/>
        <dbReference type="EC" id="2.4.1.46"/>
    </reaction>
    <physiologicalReaction direction="left-to-right" evidence="3">
        <dbReference type="Rhea" id="RHEA:14946"/>
    </physiologicalReaction>
</comment>
<comment type="catalytic activity">
    <reaction evidence="3">
        <text>1,2-di-(9Z,12Z-octadecadienoyl)-sn-glycerol + UDP-alpha-D-galactose = 1,2-di-(9Z,12Z-octadecadienoyl)-3-beta-D-galactosyl-sn-glycerol + UDP + H(+)</text>
        <dbReference type="Rhea" id="RHEA:48492"/>
        <dbReference type="ChEBI" id="CHEBI:15378"/>
        <dbReference type="ChEBI" id="CHEBI:58223"/>
        <dbReference type="ChEBI" id="CHEBI:66914"/>
        <dbReference type="ChEBI" id="CHEBI:77127"/>
        <dbReference type="ChEBI" id="CHEBI:90506"/>
    </reaction>
    <physiologicalReaction direction="left-to-right" evidence="3">
        <dbReference type="Rhea" id="RHEA:48493"/>
    </physiologicalReaction>
</comment>
<comment type="catalytic activity">
    <reaction evidence="3">
        <text>1-(9Z-octadecenoyl)-2-hexadecanoyl-sn-glycerol + UDP-alpha-D-galactose = 1-(9Z-octadecenoyl)-2-hexadecanoyl-3-beta-D-galactosyl-sn-glycerol + UDP + H(+)</text>
        <dbReference type="Rhea" id="RHEA:48496"/>
        <dbReference type="ChEBI" id="CHEBI:15378"/>
        <dbReference type="ChEBI" id="CHEBI:58223"/>
        <dbReference type="ChEBI" id="CHEBI:66914"/>
        <dbReference type="ChEBI" id="CHEBI:75447"/>
        <dbReference type="ChEBI" id="CHEBI:90507"/>
    </reaction>
    <physiologicalReaction direction="left-to-right" evidence="3">
        <dbReference type="Rhea" id="RHEA:48497"/>
    </physiologicalReaction>
</comment>
<comment type="catalytic activity">
    <reaction evidence="3">
        <text>1,2-di-(9Z-octadecenoyl)-sn-glycerol + UDP-alpha-D-galactose = 1,2-di-(9Z-octadecenoyl)-3-beta-D-galactosyl-sn-glycerol + UDP + H(+)</text>
        <dbReference type="Rhea" id="RHEA:48480"/>
        <dbReference type="ChEBI" id="CHEBI:15378"/>
        <dbReference type="ChEBI" id="CHEBI:52333"/>
        <dbReference type="ChEBI" id="CHEBI:58223"/>
        <dbReference type="ChEBI" id="CHEBI:63775"/>
        <dbReference type="ChEBI" id="CHEBI:66914"/>
    </reaction>
    <physiologicalReaction direction="left-to-right" evidence="3">
        <dbReference type="Rhea" id="RHEA:48481"/>
    </physiologicalReaction>
</comment>
<comment type="activity regulation">
    <text evidence="7">Inhibited by galvestine-1.</text>
</comment>
<comment type="biophysicochemical properties">
    <phDependence>
        <text>Optimum pH is 8.5.</text>
    </phDependence>
</comment>
<comment type="subcellular location">
    <subcellularLocation>
        <location evidence="11">Plastid</location>
        <location evidence="11">Chloroplast outer membrane</location>
    </subcellularLocation>
</comment>
<comment type="tissue specificity">
    <text evidence="3 4">Expressed mainly in floral buds. Detected in roots, leaves, stems, siliques and pollen tubes.</text>
</comment>
<comment type="developmental stage">
    <text evidence="3">Low and continuous expression throughout whole developmental stages.</text>
</comment>
<comment type="induction">
    <text evidence="3 4 5 8">Induced by phosphate deprivation (PubMed:11553816, PubMed:14730084, PubMed:16762032). Induced in rosette leaves when grown in acidic soil (PubMed:31201686).</text>
</comment>
<comment type="miscellaneous">
    <text>Auxin activates expression during Pi starvation, whereas cytokinin represses it.</text>
</comment>
<comment type="similarity">
    <text evidence="10">Belongs to the glycosyltransferase 28 family.</text>
</comment>
<comment type="sequence caution" evidence="10">
    <conflict type="erroneous initiation">
        <sequence resource="EMBL-CDS" id="AAK50066"/>
    </conflict>
    <text>Truncated N-terminus.</text>
</comment>
<protein>
    <recommendedName>
        <fullName evidence="10">Monogalactosyldiacylglycerol synthase 2, chloroplastic</fullName>
        <shortName evidence="9">AtMGD2</shortName>
        <ecNumber evidence="3">2.4.1.46</ecNumber>
    </recommendedName>
    <alternativeName>
        <fullName evidence="9">MGDG synthase type B</fullName>
    </alternativeName>
</protein>
<name>MGDG2_ARATH</name>
<gene>
    <name evidence="9" type="primary">MGD2</name>
    <name evidence="9" type="synonym">MGDB</name>
    <name evidence="12" type="ordered locus">At5g20410</name>
    <name type="ORF">F5O24.300</name>
    <name type="ORF">F7C8</name>
</gene>
<dbReference type="EC" id="2.4.1.46" evidence="3"/>
<dbReference type="EMBL" id="AJ000331">
    <property type="protein sequence ID" value="CAA04005.1"/>
    <property type="molecule type" value="mRNA"/>
</dbReference>
<dbReference type="EMBL" id="KJ138675">
    <property type="protein sequence ID" value="AHL38615.1"/>
    <property type="molecule type" value="mRNA"/>
</dbReference>
<dbReference type="EMBL" id="AF296825">
    <property type="status" value="NOT_ANNOTATED_CDS"/>
    <property type="molecule type" value="Genomic_DNA"/>
</dbReference>
<dbReference type="EMBL" id="AF296833">
    <property type="status" value="NOT_ANNOTATED_CDS"/>
    <property type="molecule type" value="Genomic_DNA"/>
</dbReference>
<dbReference type="EMBL" id="CP002688">
    <property type="protein sequence ID" value="AED92840.1"/>
    <property type="molecule type" value="Genomic_DNA"/>
</dbReference>
<dbReference type="EMBL" id="AF372926">
    <property type="protein sequence ID" value="AAK50066.1"/>
    <property type="status" value="ALT_INIT"/>
    <property type="molecule type" value="mRNA"/>
</dbReference>
<dbReference type="EMBL" id="AY078038">
    <property type="protein sequence ID" value="AAL77739.1"/>
    <property type="molecule type" value="mRNA"/>
</dbReference>
<dbReference type="PIR" id="T52269">
    <property type="entry name" value="T52269"/>
</dbReference>
<dbReference type="RefSeq" id="NP_568394.2">
    <property type="nucleotide sequence ID" value="NM_122048.4"/>
</dbReference>
<dbReference type="SMR" id="O82730"/>
<dbReference type="FunCoup" id="O82730">
    <property type="interactions" value="4"/>
</dbReference>
<dbReference type="STRING" id="3702.O82730"/>
<dbReference type="SwissLipids" id="SLP:000001445"/>
<dbReference type="CAZy" id="GT28">
    <property type="family name" value="Glycosyltransferase Family 28"/>
</dbReference>
<dbReference type="iPTMnet" id="O82730"/>
<dbReference type="PaxDb" id="3702-AT5G20410.1"/>
<dbReference type="ProteomicsDB" id="238336"/>
<dbReference type="EnsemblPlants" id="AT5G20410.1">
    <property type="protein sequence ID" value="AT5G20410.1"/>
    <property type="gene ID" value="AT5G20410"/>
</dbReference>
<dbReference type="GeneID" id="832163"/>
<dbReference type="Gramene" id="AT5G20410.1">
    <property type="protein sequence ID" value="AT5G20410.1"/>
    <property type="gene ID" value="AT5G20410"/>
</dbReference>
<dbReference type="KEGG" id="ath:AT5G20410"/>
<dbReference type="Araport" id="AT5G20410"/>
<dbReference type="TAIR" id="AT5G20410">
    <property type="gene designation" value="MGD2"/>
</dbReference>
<dbReference type="eggNOG" id="ENOG502QPXV">
    <property type="taxonomic scope" value="Eukaryota"/>
</dbReference>
<dbReference type="HOGENOM" id="CLU_028367_3_1_1"/>
<dbReference type="InParanoid" id="O82730"/>
<dbReference type="OMA" id="EEENCQY"/>
<dbReference type="PhylomeDB" id="O82730"/>
<dbReference type="BioCyc" id="MetaCyc:AT5G20410-MONOMER"/>
<dbReference type="BRENDA" id="2.4.1.46">
    <property type="organism ID" value="399"/>
</dbReference>
<dbReference type="PRO" id="PR:O82730"/>
<dbReference type="Proteomes" id="UP000006548">
    <property type="component" value="Chromosome 5"/>
</dbReference>
<dbReference type="ExpressionAtlas" id="O82730">
    <property type="expression patterns" value="baseline and differential"/>
</dbReference>
<dbReference type="GO" id="GO:0009707">
    <property type="term" value="C:chloroplast outer membrane"/>
    <property type="evidence" value="ECO:0000304"/>
    <property type="project" value="TAIR"/>
</dbReference>
<dbReference type="GO" id="GO:0046509">
    <property type="term" value="F:1,2-diacylglycerol 3-beta-galactosyltransferase activity"/>
    <property type="evidence" value="ECO:0007669"/>
    <property type="project" value="UniProtKB-EC"/>
</dbReference>
<dbReference type="GO" id="GO:0035250">
    <property type="term" value="F:UDP-galactosyltransferase activity"/>
    <property type="evidence" value="ECO:0000304"/>
    <property type="project" value="TAIR"/>
</dbReference>
<dbReference type="GO" id="GO:0016036">
    <property type="term" value="P:cellular response to phosphate starvation"/>
    <property type="evidence" value="ECO:0000316"/>
    <property type="project" value="TAIR"/>
</dbReference>
<dbReference type="GO" id="GO:0006631">
    <property type="term" value="P:fatty acid metabolic process"/>
    <property type="evidence" value="ECO:0000316"/>
    <property type="project" value="TAIR"/>
</dbReference>
<dbReference type="GO" id="GO:0019374">
    <property type="term" value="P:galactolipid metabolic process"/>
    <property type="evidence" value="ECO:0000316"/>
    <property type="project" value="TAIR"/>
</dbReference>
<dbReference type="GO" id="GO:0009247">
    <property type="term" value="P:glycolipid biosynthetic process"/>
    <property type="evidence" value="ECO:0007669"/>
    <property type="project" value="InterPro"/>
</dbReference>
<dbReference type="CDD" id="cd17507">
    <property type="entry name" value="GT28_Beta-DGS-like"/>
    <property type="match status" value="1"/>
</dbReference>
<dbReference type="FunFam" id="3.40.50.2000:FF:000111">
    <property type="entry name" value="Monogalactosyldiacylglycerol synthase 3, chloroplastic"/>
    <property type="match status" value="1"/>
</dbReference>
<dbReference type="Gene3D" id="3.40.50.2000">
    <property type="entry name" value="Glycogen Phosphorylase B"/>
    <property type="match status" value="1"/>
</dbReference>
<dbReference type="InterPro" id="IPR009695">
    <property type="entry name" value="Diacylglyc_glucosyltr_N"/>
</dbReference>
<dbReference type="InterPro" id="IPR007235">
    <property type="entry name" value="Glyco_trans_28_C"/>
</dbReference>
<dbReference type="InterPro" id="IPR050519">
    <property type="entry name" value="Glycosyltransf_28_UgtP"/>
</dbReference>
<dbReference type="PANTHER" id="PTHR43025">
    <property type="entry name" value="MONOGALACTOSYLDIACYLGLYCEROL SYNTHASE"/>
    <property type="match status" value="1"/>
</dbReference>
<dbReference type="PANTHER" id="PTHR43025:SF1">
    <property type="entry name" value="MONOGALACTOSYLDIACYLGLYCEROL SYNTHASE 2, CHLOROPLASTIC"/>
    <property type="match status" value="1"/>
</dbReference>
<dbReference type="Pfam" id="PF04101">
    <property type="entry name" value="Glyco_tran_28_C"/>
    <property type="match status" value="1"/>
</dbReference>
<dbReference type="Pfam" id="PF06925">
    <property type="entry name" value="MGDG_synth"/>
    <property type="match status" value="1"/>
</dbReference>
<dbReference type="SUPFAM" id="SSF53756">
    <property type="entry name" value="UDP-Glycosyltransferase/glycogen phosphorylase"/>
    <property type="match status" value="1"/>
</dbReference>
<feature type="transit peptide" description="Chloroplast" evidence="2">
    <location>
        <begin position="1"/>
        <end status="unknown"/>
    </location>
</feature>
<feature type="chain" id="PRO_0000349422" description="Monogalactosyldiacylglycerol synthase 2, chloroplastic">
    <location>
        <begin status="unknown"/>
        <end position="468"/>
    </location>
</feature>
<feature type="binding site" evidence="1">
    <location>
        <position position="82"/>
    </location>
    <ligand>
        <name>UDP</name>
        <dbReference type="ChEBI" id="CHEBI:58223"/>
    </ligand>
</feature>
<feature type="binding site" evidence="1">
    <location>
        <position position="251"/>
    </location>
    <ligand>
        <name>UDP</name>
        <dbReference type="ChEBI" id="CHEBI:58223"/>
    </ligand>
</feature>
<feature type="binding site" evidence="1">
    <location>
        <begin position="361"/>
        <end position="365"/>
    </location>
    <ligand>
        <name>UDP</name>
        <dbReference type="ChEBI" id="CHEBI:58223"/>
    </ligand>
</feature>
<feature type="binding site" evidence="1">
    <location>
        <position position="383"/>
    </location>
    <ligand>
        <name>UDP</name>
        <dbReference type="ChEBI" id="CHEBI:58223"/>
    </ligand>
</feature>